<accession>Q9YD20</accession>
<organism>
    <name type="scientific">Aeropyrum pernix (strain ATCC 700893 / DSM 11879 / JCM 9820 / NBRC 100138 / K1)</name>
    <dbReference type="NCBI Taxonomy" id="272557"/>
    <lineage>
        <taxon>Archaea</taxon>
        <taxon>Thermoproteota</taxon>
        <taxon>Thermoprotei</taxon>
        <taxon>Desulfurococcales</taxon>
        <taxon>Desulfurococcaceae</taxon>
        <taxon>Aeropyrum</taxon>
    </lineage>
</organism>
<feature type="chain" id="PRO_0000153848" description="Ribonuclease P protein component 4">
    <location>
        <begin position="1"/>
        <end position="163"/>
    </location>
</feature>
<feature type="region of interest" description="Disordered" evidence="2">
    <location>
        <begin position="110"/>
        <end position="163"/>
    </location>
</feature>
<feature type="compositionally biased region" description="Gly residues" evidence="2">
    <location>
        <begin position="152"/>
        <end position="163"/>
    </location>
</feature>
<feature type="binding site" evidence="1">
    <location>
        <position position="66"/>
    </location>
    <ligand>
        <name>Zn(2+)</name>
        <dbReference type="ChEBI" id="CHEBI:29105"/>
    </ligand>
</feature>
<feature type="binding site" evidence="1">
    <location>
        <position position="69"/>
    </location>
    <ligand>
        <name>Zn(2+)</name>
        <dbReference type="ChEBI" id="CHEBI:29105"/>
    </ligand>
</feature>
<feature type="binding site" evidence="1">
    <location>
        <position position="96"/>
    </location>
    <ligand>
        <name>Zn(2+)</name>
        <dbReference type="ChEBI" id="CHEBI:29105"/>
    </ligand>
</feature>
<feature type="binding site" evidence="1">
    <location>
        <position position="99"/>
    </location>
    <ligand>
        <name>Zn(2+)</name>
        <dbReference type="ChEBI" id="CHEBI:29105"/>
    </ligand>
</feature>
<name>RNP4_AERPE</name>
<reference key="1">
    <citation type="journal article" date="1999" name="DNA Res.">
        <title>Complete genome sequence of an aerobic hyper-thermophilic crenarchaeon, Aeropyrum pernix K1.</title>
        <authorList>
            <person name="Kawarabayasi Y."/>
            <person name="Hino Y."/>
            <person name="Horikawa H."/>
            <person name="Yamazaki S."/>
            <person name="Haikawa Y."/>
            <person name="Jin-no K."/>
            <person name="Takahashi M."/>
            <person name="Sekine M."/>
            <person name="Baba S."/>
            <person name="Ankai A."/>
            <person name="Kosugi H."/>
            <person name="Hosoyama A."/>
            <person name="Fukui S."/>
            <person name="Nagai Y."/>
            <person name="Nishijima K."/>
            <person name="Nakazawa H."/>
            <person name="Takamiya M."/>
            <person name="Masuda S."/>
            <person name="Funahashi T."/>
            <person name="Tanaka T."/>
            <person name="Kudoh Y."/>
            <person name="Yamazaki J."/>
            <person name="Kushida N."/>
            <person name="Oguchi A."/>
            <person name="Aoki K."/>
            <person name="Kubota K."/>
            <person name="Nakamura Y."/>
            <person name="Nomura N."/>
            <person name="Sako Y."/>
            <person name="Kikuchi H."/>
        </authorList>
    </citation>
    <scope>NUCLEOTIDE SEQUENCE [LARGE SCALE GENOMIC DNA]</scope>
    <source>
        <strain>ATCC 700893 / DSM 11879 / JCM 9820 / NBRC 100138 / K1</strain>
    </source>
</reference>
<gene>
    <name evidence="1" type="primary">rnp4</name>
    <name type="ordered locus">APE_1092.1</name>
</gene>
<comment type="function">
    <text evidence="1">Part of ribonuclease P, a protein complex that generates mature tRNA molecules by cleaving their 5'-ends.</text>
</comment>
<comment type="catalytic activity">
    <reaction evidence="1">
        <text>Endonucleolytic cleavage of RNA, removing 5'-extranucleotides from tRNA precursor.</text>
        <dbReference type="EC" id="3.1.26.5"/>
    </reaction>
</comment>
<comment type="cofactor">
    <cofactor evidence="1">
        <name>Zn(2+)</name>
        <dbReference type="ChEBI" id="CHEBI:29105"/>
    </cofactor>
    <text evidence="1">Binds 1 zinc ion per subunit.</text>
</comment>
<comment type="subunit">
    <text evidence="1">Consists of a catalytic RNA component and at least 4-5 protein subunits.</text>
</comment>
<comment type="subcellular location">
    <subcellularLocation>
        <location evidence="1">Cytoplasm</location>
    </subcellularLocation>
</comment>
<comment type="similarity">
    <text evidence="1">Belongs to the eukaryotic/archaeal RNase P protein component 4 family.</text>
</comment>
<proteinExistence type="inferred from homology"/>
<keyword id="KW-0963">Cytoplasm</keyword>
<keyword id="KW-0255">Endonuclease</keyword>
<keyword id="KW-0378">Hydrolase</keyword>
<keyword id="KW-0479">Metal-binding</keyword>
<keyword id="KW-0540">Nuclease</keyword>
<keyword id="KW-1185">Reference proteome</keyword>
<keyword id="KW-0819">tRNA processing</keyword>
<keyword id="KW-0862">Zinc</keyword>
<dbReference type="EC" id="3.1.26.5" evidence="1"/>
<dbReference type="EMBL" id="BA000002">
    <property type="protein sequence ID" value="BAA80077.2"/>
    <property type="molecule type" value="Genomic_DNA"/>
</dbReference>
<dbReference type="PIR" id="E72709">
    <property type="entry name" value="E72709"/>
</dbReference>
<dbReference type="RefSeq" id="WP_010866169.1">
    <property type="nucleotide sequence ID" value="NC_000854.2"/>
</dbReference>
<dbReference type="SMR" id="Q9YD20"/>
<dbReference type="STRING" id="272557.APE_1092.1"/>
<dbReference type="EnsemblBacteria" id="BAA80077">
    <property type="protein sequence ID" value="BAA80077"/>
    <property type="gene ID" value="APE_1092.1"/>
</dbReference>
<dbReference type="GeneID" id="1445786"/>
<dbReference type="KEGG" id="ape:APE_1092.1"/>
<dbReference type="eggNOG" id="arCOG04345">
    <property type="taxonomic scope" value="Archaea"/>
</dbReference>
<dbReference type="Proteomes" id="UP000002518">
    <property type="component" value="Chromosome"/>
</dbReference>
<dbReference type="GO" id="GO:0005737">
    <property type="term" value="C:cytoplasm"/>
    <property type="evidence" value="ECO:0007669"/>
    <property type="project" value="UniProtKB-SubCell"/>
</dbReference>
<dbReference type="GO" id="GO:0030677">
    <property type="term" value="C:ribonuclease P complex"/>
    <property type="evidence" value="ECO:0007669"/>
    <property type="project" value="UniProtKB-UniRule"/>
</dbReference>
<dbReference type="GO" id="GO:0004526">
    <property type="term" value="F:ribonuclease P activity"/>
    <property type="evidence" value="ECO:0007669"/>
    <property type="project" value="UniProtKB-UniRule"/>
</dbReference>
<dbReference type="GO" id="GO:0008270">
    <property type="term" value="F:zinc ion binding"/>
    <property type="evidence" value="ECO:0007669"/>
    <property type="project" value="UniProtKB-UniRule"/>
</dbReference>
<dbReference type="GO" id="GO:0001682">
    <property type="term" value="P:tRNA 5'-leader removal"/>
    <property type="evidence" value="ECO:0007669"/>
    <property type="project" value="UniProtKB-UniRule"/>
</dbReference>
<dbReference type="Gene3D" id="6.20.50.20">
    <property type="match status" value="1"/>
</dbReference>
<dbReference type="HAMAP" id="MF_00757">
    <property type="entry name" value="RNase_P_4"/>
    <property type="match status" value="1"/>
</dbReference>
<dbReference type="InterPro" id="IPR016432">
    <property type="entry name" value="RNP4"/>
</dbReference>
<dbReference type="InterPro" id="IPR007175">
    <property type="entry name" value="Rpr2/Snm1/Rpp21"/>
</dbReference>
<dbReference type="PANTHER" id="PTHR14742:SF0">
    <property type="entry name" value="RIBONUCLEASE P PROTEIN SUBUNIT P21"/>
    <property type="match status" value="1"/>
</dbReference>
<dbReference type="PANTHER" id="PTHR14742">
    <property type="entry name" value="RIBONUCLEASE P SUBUNIT P21"/>
    <property type="match status" value="1"/>
</dbReference>
<dbReference type="Pfam" id="PF04032">
    <property type="entry name" value="Rpr2"/>
    <property type="match status" value="1"/>
</dbReference>
<protein>
    <recommendedName>
        <fullName evidence="1">Ribonuclease P protein component 4</fullName>
        <shortName evidence="1">RNase P component 4</shortName>
        <ecNumber evidence="1">3.1.26.5</ecNumber>
    </recommendedName>
    <alternativeName>
        <fullName evidence="1">Rpp21</fullName>
    </alternativeName>
</protein>
<sequence length="163" mass="18167">MKSRRSRCRRSFTTLVRREEERLARWALELARRGLTGEARRVAEQLFQLAASTRVRPPRRVKRLFCKNCRTPLIPGLTARVRLRSQGGMSYTVVTCLSCGWIHRYPYRKGPRGGAPISPPAAEYGSGGRDSGEREDKGPQGPPRQGGRDNRQGGGHQGGPKGD</sequence>
<evidence type="ECO:0000255" key="1">
    <source>
        <dbReference type="HAMAP-Rule" id="MF_00757"/>
    </source>
</evidence>
<evidence type="ECO:0000256" key="2">
    <source>
        <dbReference type="SAM" id="MobiDB-lite"/>
    </source>
</evidence>